<organismHost>
    <name type="scientific">Homo sapiens</name>
    <name type="common">Human</name>
    <dbReference type="NCBI Taxonomy" id="9606"/>
</organismHost>
<organism>
    <name type="scientific">Human herpesvirus 8 type P (isolate GK18)</name>
    <name type="common">HHV-8</name>
    <name type="synonym">Kaposi's sarcoma-associated herpesvirus</name>
    <dbReference type="NCBI Taxonomy" id="868565"/>
    <lineage>
        <taxon>Viruses</taxon>
        <taxon>Duplodnaviria</taxon>
        <taxon>Heunggongvirae</taxon>
        <taxon>Peploviricota</taxon>
        <taxon>Herviviricetes</taxon>
        <taxon>Herpesvirales</taxon>
        <taxon>Orthoherpesviridae</taxon>
        <taxon>Gammaherpesvirinae</taxon>
        <taxon>Rhadinovirus</taxon>
        <taxon>Rhadinovirus humangamma8</taxon>
        <taxon>Human herpesvirus 8</taxon>
    </lineage>
</organism>
<gene>
    <name type="primary">ORF66</name>
</gene>
<proteinExistence type="evidence at protein level"/>
<evidence type="ECO:0000269" key="1">
    <source>
    </source>
</evidence>
<evidence type="ECO:0000269" key="2">
    <source>
    </source>
</evidence>
<evidence type="ECO:0000305" key="3"/>
<sequence length="429" mass="46983">MALDQRWDRFLVSWFGLDEAQLTAHRVFEGENGVPVEEYVAFVIFGERGFQGNMPSWARHLLDRPSLAQAIAVLRAGSDTVAKQAQICAAQQLLGAHVWVVVTLSRAQAADHARAIPRHVWAKYLSLPFSKACAQLCKLLALCSRFPLVTCCSKPPPSLPWLRKKWHGPLPRRPLLEVPSPTRRGVAATEDGNGLGIGAADTGLREALERVAPTVPCGNPFDAMLGSLCFLSLIKSRHVVLPACEQEGPGLVRNLGRRLLAYNVLSPCVSIPVICSRVARAALAKRARCARAVVCMECGHCLNFGRGKFHTVNFPPTNVFFSRDRKEKQFTICATTGRIYCSYCGSEHMRVYPLCDITGRGTLARVVIRAVLANNAALAIRDLDQTVSFVVPCLGTPDCEAALLKHRDVRGLLQLTSQLLEFCCGKCSS</sequence>
<feature type="chain" id="PRO_0000423767" description="Protein ORF66">
    <location>
        <begin position="1"/>
        <end position="429"/>
    </location>
</feature>
<reference key="1">
    <citation type="journal article" date="1999" name="J. Virol.">
        <title>Identification of a spliced gene from Kaposi's sarcoma-associated herpesvirus encoding a protein with similarities to latent membrane proteins 1 and 2A of Epstein-Barr virus.</title>
        <authorList>
            <person name="Glenn M."/>
            <person name="Rainbow L."/>
            <person name="Aurade F."/>
            <person name="Davison A."/>
            <person name="Schulz T.F."/>
        </authorList>
    </citation>
    <scope>NUCLEOTIDE SEQUENCE [LARGE SCALE GENOMIC DNA]</scope>
</reference>
<reference key="2">
    <citation type="journal article" date="2006" name="J. Gen. Virol.">
        <title>Kaposi's sarcoma-associated herpesvirus immune modulation: an overview.</title>
        <authorList>
            <person name="Rezaee S.A.R."/>
            <person name="Cunningham C."/>
            <person name="Davison A.J."/>
            <person name="Blackbourn D.J."/>
        </authorList>
    </citation>
    <scope>NUCLEOTIDE SEQUENCE [LARGE SCALE GENOMIC DNA]</scope>
</reference>
<reference key="3">
    <citation type="journal article" date="2017" name="Sci. Rep.">
        <title>Kaposi's sarcoma-associated herpesvirus ORF34 is essential for late gene expression and virus production.</title>
        <authorList>
            <person name="Nishimura M."/>
            <person name="Watanabe T."/>
            <person name="Yagi S."/>
            <person name="Yamanaka T."/>
            <person name="Fujimuro M."/>
        </authorList>
    </citation>
    <scope>FUNCTION</scope>
    <scope>INTERACTION WITH ORF34</scope>
    <scope>SUBCELLULAR LOCATION</scope>
</reference>
<reference key="4">
    <citation type="journal article" date="2020" name="J. Virol.">
        <title>Kaposi's Sarcoma-Associated Herpesvirus ORF66 Is Essential for Late Gene Expression and Virus Production via Interaction with ORF34.</title>
        <authorList>
            <person name="Watanabe T."/>
            <person name="Nishimura M."/>
            <person name="Izumi T."/>
            <person name="Kuriyama K."/>
            <person name="Iwaisako Y."/>
            <person name="Hosokawa K."/>
            <person name="Takaori-Kondo A."/>
            <person name="Fujimuro M."/>
        </authorList>
    </citation>
    <scope>FUNCTION</scope>
    <scope>INTERACTION WITH ORF34</scope>
    <scope>DISRUPTION PHENOTYPE</scope>
    <scope>INDUCTION</scope>
</reference>
<accession>F5HG20</accession>
<comment type="function">
    <text evidence="1 2">Participates in the expression of late viral mRNAs.</text>
</comment>
<comment type="subunit">
    <text evidence="1 2">Interacts with ORF34.</text>
</comment>
<comment type="subcellular location">
    <subcellularLocation>
        <location evidence="1">Host nucleus</location>
    </subcellularLocation>
    <subcellularLocation>
        <location evidence="1">Host cytoplasm</location>
    </subcellularLocation>
    <text evidence="1">Mainly localizes in host nucleus and partially in host cytosol.</text>
</comment>
<comment type="induction">
    <text evidence="2">Expressed during the early stages of lytic infection.</text>
</comment>
<comment type="disruption phenotype">
    <text evidence="2">Deletion mutant shows mainly attenuated late gene expression and decreased virus production while viral DNA replication remains unaffected.</text>
</comment>
<comment type="similarity">
    <text evidence="3">Belongs to the herpesviridae UL49 family.</text>
</comment>
<dbReference type="EMBL" id="AF148805">
    <property type="protein sequence ID" value="ABD28921.1"/>
    <property type="molecule type" value="Genomic_DNA"/>
</dbReference>
<dbReference type="RefSeq" id="YP_001129423.1">
    <property type="nucleotide sequence ID" value="NC_009333.1"/>
</dbReference>
<dbReference type="DNASU" id="4961523"/>
<dbReference type="GeneID" id="4961523"/>
<dbReference type="KEGG" id="vg:4961523"/>
<dbReference type="Proteomes" id="UP000000942">
    <property type="component" value="Segment"/>
</dbReference>
<dbReference type="GO" id="GO:0030430">
    <property type="term" value="C:host cell cytoplasm"/>
    <property type="evidence" value="ECO:0007669"/>
    <property type="project" value="UniProtKB-SubCell"/>
</dbReference>
<dbReference type="GO" id="GO:0042025">
    <property type="term" value="C:host cell nucleus"/>
    <property type="evidence" value="ECO:0007669"/>
    <property type="project" value="UniProtKB-SubCell"/>
</dbReference>
<dbReference type="GO" id="GO:0019033">
    <property type="term" value="C:viral tegument"/>
    <property type="evidence" value="ECO:0007669"/>
    <property type="project" value="InterPro"/>
</dbReference>
<dbReference type="GO" id="GO:0016032">
    <property type="term" value="P:viral process"/>
    <property type="evidence" value="ECO:0007669"/>
    <property type="project" value="InterPro"/>
</dbReference>
<dbReference type="InterPro" id="IPR004339">
    <property type="entry name" value="UL49"/>
</dbReference>
<dbReference type="Pfam" id="PF03117">
    <property type="entry name" value="Herpes_UL49_1"/>
    <property type="match status" value="1"/>
</dbReference>
<protein>
    <recommendedName>
        <fullName>Protein ORF66</fullName>
    </recommendedName>
</protein>
<keyword id="KW-1035">Host cytoplasm</keyword>
<keyword id="KW-1048">Host nucleus</keyword>
<keyword id="KW-1185">Reference proteome</keyword>
<name>UL49_HHV8P</name>